<name>HBB_LYNLY</name>
<sequence length="146" mass="15925">GFLTAEEKGLVNGLWGKVNVDEVGGEALGRLLVVYPWTQRFFQSFGDLSSADAIMGNSKVKAHGKKVLNSFSDGLKNIDDLKGAFAKLSELHCDKLHVDPENFRLLGNVLVCVLAHHFGHEFNPQVQAAFQKVVAGVANALAHKYH</sequence>
<dbReference type="PIR" id="B53880">
    <property type="entry name" value="B53880"/>
</dbReference>
<dbReference type="SMR" id="P41328"/>
<dbReference type="GO" id="GO:0072562">
    <property type="term" value="C:blood microparticle"/>
    <property type="evidence" value="ECO:0007669"/>
    <property type="project" value="TreeGrafter"/>
</dbReference>
<dbReference type="GO" id="GO:0031838">
    <property type="term" value="C:haptoglobin-hemoglobin complex"/>
    <property type="evidence" value="ECO:0007669"/>
    <property type="project" value="TreeGrafter"/>
</dbReference>
<dbReference type="GO" id="GO:0005833">
    <property type="term" value="C:hemoglobin complex"/>
    <property type="evidence" value="ECO:0007669"/>
    <property type="project" value="InterPro"/>
</dbReference>
<dbReference type="GO" id="GO:0031720">
    <property type="term" value="F:haptoglobin binding"/>
    <property type="evidence" value="ECO:0007669"/>
    <property type="project" value="TreeGrafter"/>
</dbReference>
<dbReference type="GO" id="GO:0020037">
    <property type="term" value="F:heme binding"/>
    <property type="evidence" value="ECO:0007669"/>
    <property type="project" value="InterPro"/>
</dbReference>
<dbReference type="GO" id="GO:0031721">
    <property type="term" value="F:hemoglobin alpha binding"/>
    <property type="evidence" value="ECO:0007669"/>
    <property type="project" value="TreeGrafter"/>
</dbReference>
<dbReference type="GO" id="GO:0046872">
    <property type="term" value="F:metal ion binding"/>
    <property type="evidence" value="ECO:0007669"/>
    <property type="project" value="UniProtKB-KW"/>
</dbReference>
<dbReference type="GO" id="GO:0043177">
    <property type="term" value="F:organic acid binding"/>
    <property type="evidence" value="ECO:0007669"/>
    <property type="project" value="TreeGrafter"/>
</dbReference>
<dbReference type="GO" id="GO:0019825">
    <property type="term" value="F:oxygen binding"/>
    <property type="evidence" value="ECO:0007669"/>
    <property type="project" value="InterPro"/>
</dbReference>
<dbReference type="GO" id="GO:0005344">
    <property type="term" value="F:oxygen carrier activity"/>
    <property type="evidence" value="ECO:0007669"/>
    <property type="project" value="UniProtKB-KW"/>
</dbReference>
<dbReference type="GO" id="GO:0004601">
    <property type="term" value="F:peroxidase activity"/>
    <property type="evidence" value="ECO:0007669"/>
    <property type="project" value="TreeGrafter"/>
</dbReference>
<dbReference type="GO" id="GO:0042744">
    <property type="term" value="P:hydrogen peroxide catabolic process"/>
    <property type="evidence" value="ECO:0007669"/>
    <property type="project" value="TreeGrafter"/>
</dbReference>
<dbReference type="CDD" id="cd08925">
    <property type="entry name" value="Hb-beta-like"/>
    <property type="match status" value="1"/>
</dbReference>
<dbReference type="FunFam" id="1.10.490.10:FF:000001">
    <property type="entry name" value="Hemoglobin subunit beta"/>
    <property type="match status" value="1"/>
</dbReference>
<dbReference type="Gene3D" id="1.10.490.10">
    <property type="entry name" value="Globins"/>
    <property type="match status" value="1"/>
</dbReference>
<dbReference type="InterPro" id="IPR000971">
    <property type="entry name" value="Globin"/>
</dbReference>
<dbReference type="InterPro" id="IPR009050">
    <property type="entry name" value="Globin-like_sf"/>
</dbReference>
<dbReference type="InterPro" id="IPR012292">
    <property type="entry name" value="Globin/Proto"/>
</dbReference>
<dbReference type="InterPro" id="IPR002337">
    <property type="entry name" value="Hemoglobin_b"/>
</dbReference>
<dbReference type="InterPro" id="IPR050056">
    <property type="entry name" value="Hemoglobin_oxygen_transport"/>
</dbReference>
<dbReference type="PANTHER" id="PTHR11442">
    <property type="entry name" value="HEMOGLOBIN FAMILY MEMBER"/>
    <property type="match status" value="1"/>
</dbReference>
<dbReference type="PANTHER" id="PTHR11442:SF42">
    <property type="entry name" value="HEMOGLOBIN SUBUNIT BETA"/>
    <property type="match status" value="1"/>
</dbReference>
<dbReference type="Pfam" id="PF00042">
    <property type="entry name" value="Globin"/>
    <property type="match status" value="1"/>
</dbReference>
<dbReference type="PRINTS" id="PR00814">
    <property type="entry name" value="BETAHAEM"/>
</dbReference>
<dbReference type="SUPFAM" id="SSF46458">
    <property type="entry name" value="Globin-like"/>
    <property type="match status" value="1"/>
</dbReference>
<dbReference type="PROSITE" id="PS01033">
    <property type="entry name" value="GLOBIN"/>
    <property type="match status" value="1"/>
</dbReference>
<reference key="1">
    <citation type="journal article" date="1992" name="J. Protein Chem.">
        <title>Carnivora: the primary structure of the major hemoglobin component from adult European lynx (Lynx lynx, Felidae).</title>
        <authorList>
            <person name="Ahmed A."/>
            <person name="Jahan M."/>
            <person name="Braunitzer G."/>
        </authorList>
    </citation>
    <scope>PROTEIN SEQUENCE</scope>
</reference>
<evidence type="ECO:0000250" key="1">
    <source>
        <dbReference type="UniProtKB" id="P68871"/>
    </source>
</evidence>
<evidence type="ECO:0000255" key="2">
    <source>
        <dbReference type="PROSITE-ProRule" id="PRU00238"/>
    </source>
</evidence>
<organism>
    <name type="scientific">Lynx lynx</name>
    <name type="common">Eurasian lynx</name>
    <name type="synonym">Felis lynx</name>
    <dbReference type="NCBI Taxonomy" id="13125"/>
    <lineage>
        <taxon>Eukaryota</taxon>
        <taxon>Metazoa</taxon>
        <taxon>Chordata</taxon>
        <taxon>Craniata</taxon>
        <taxon>Vertebrata</taxon>
        <taxon>Euteleostomi</taxon>
        <taxon>Mammalia</taxon>
        <taxon>Eutheria</taxon>
        <taxon>Laurasiatheria</taxon>
        <taxon>Carnivora</taxon>
        <taxon>Feliformia</taxon>
        <taxon>Felidae</taxon>
        <taxon>Felinae</taxon>
        <taxon>Lynx</taxon>
    </lineage>
</organism>
<accession>P41328</accession>
<proteinExistence type="evidence at protein level"/>
<keyword id="KW-0007">Acetylation</keyword>
<keyword id="KW-0903">Direct protein sequencing</keyword>
<keyword id="KW-0349">Heme</keyword>
<keyword id="KW-0408">Iron</keyword>
<keyword id="KW-0479">Metal-binding</keyword>
<keyword id="KW-0561">Oxygen transport</keyword>
<keyword id="KW-0597">Phosphoprotein</keyword>
<keyword id="KW-0702">S-nitrosylation</keyword>
<keyword id="KW-0813">Transport</keyword>
<feature type="chain" id="PRO_0000052997" description="Hemoglobin subunit beta">
    <location>
        <begin position="1"/>
        <end position="146"/>
    </location>
</feature>
<feature type="domain" description="Globin" evidence="2">
    <location>
        <begin position="2"/>
        <end position="146"/>
    </location>
</feature>
<feature type="binding site" description="distal binding residue">
    <location>
        <position position="63"/>
    </location>
    <ligand>
        <name>heme b</name>
        <dbReference type="ChEBI" id="CHEBI:60344"/>
    </ligand>
    <ligandPart>
        <name>Fe</name>
        <dbReference type="ChEBI" id="CHEBI:18248"/>
    </ligandPart>
</feature>
<feature type="binding site" description="proximal binding residue">
    <location>
        <position position="92"/>
    </location>
    <ligand>
        <name>heme b</name>
        <dbReference type="ChEBI" id="CHEBI:60344"/>
    </ligand>
    <ligandPart>
        <name>Fe</name>
        <dbReference type="ChEBI" id="CHEBI:18248"/>
    </ligandPart>
</feature>
<feature type="modified residue" description="Phosphoserine" evidence="1">
    <location>
        <position position="44"/>
    </location>
</feature>
<feature type="modified residue" description="N6-acetyllysine" evidence="1">
    <location>
        <position position="59"/>
    </location>
</feature>
<feature type="modified residue" description="N6-acetyllysine" evidence="1">
    <location>
        <position position="82"/>
    </location>
</feature>
<feature type="modified residue" description="S-nitrosocysteine" evidence="1">
    <location>
        <position position="93"/>
    </location>
</feature>
<feature type="modified residue" description="N6-acetyllysine" evidence="1">
    <location>
        <position position="144"/>
    </location>
</feature>
<protein>
    <recommendedName>
        <fullName>Hemoglobin subunit beta</fullName>
    </recommendedName>
    <alternativeName>
        <fullName>Beta-globin</fullName>
    </alternativeName>
    <alternativeName>
        <fullName>Hemoglobin beta chain</fullName>
    </alternativeName>
</protein>
<gene>
    <name type="primary">HBB</name>
</gene>
<comment type="function">
    <text>Involved in oxygen transport from the lung to the various peripheral tissues.</text>
</comment>
<comment type="subunit">
    <text>Heterotetramer of two alpha chains and two beta chains.</text>
</comment>
<comment type="tissue specificity">
    <text>Red blood cells.</text>
</comment>
<comment type="similarity">
    <text evidence="2">Belongs to the globin family.</text>
</comment>